<proteinExistence type="evidence at protein level"/>
<feature type="signal peptide" evidence="3">
    <location>
        <begin position="1"/>
        <end position="25"/>
    </location>
</feature>
<feature type="peptide" id="PRO_0000257981" description="Antimicrobial peptide Ar-AMP">
    <location>
        <begin position="26"/>
        <end position="55"/>
    </location>
</feature>
<feature type="propeptide" id="PRO_0000257982" description="Removed in mature form" evidence="3">
    <location>
        <begin position="56"/>
        <end position="89"/>
    </location>
</feature>
<feature type="domain" description="Chitin-binding type-1" evidence="2">
    <location>
        <begin position="26"/>
        <end position="68"/>
    </location>
</feature>
<feature type="disulfide bond" evidence="1 2">
    <location>
        <begin position="29"/>
        <end position="40"/>
    </location>
</feature>
<feature type="disulfide bond" evidence="1 2">
    <location>
        <begin position="34"/>
        <end position="46"/>
    </location>
</feature>
<feature type="disulfide bond" evidence="1 2">
    <location>
        <begin position="39"/>
        <end position="53"/>
    </location>
</feature>
<organism>
    <name type="scientific">Amaranthus retroflexus</name>
    <name type="common">Redroot amaranth</name>
    <name type="synonym">American pigweed</name>
    <dbReference type="NCBI Taxonomy" id="124763"/>
    <lineage>
        <taxon>Eukaryota</taxon>
        <taxon>Viridiplantae</taxon>
        <taxon>Streptophyta</taxon>
        <taxon>Embryophyta</taxon>
        <taxon>Tracheophyta</taxon>
        <taxon>Spermatophyta</taxon>
        <taxon>Magnoliopsida</taxon>
        <taxon>eudicotyledons</taxon>
        <taxon>Gunneridae</taxon>
        <taxon>Pentapetalae</taxon>
        <taxon>Caryophyllales</taxon>
        <taxon>Amaranthaceae</taxon>
        <taxon>Amaranthus</taxon>
    </lineage>
</organism>
<accession>Q5I2B2</accession>
<reference evidence="4 5" key="1">
    <citation type="journal article" date="2005" name="Phytochemistry">
        <title>An antimicrobial peptide Ar-AMP from amaranth (Amaranthus retroflexus L.) seeds.</title>
        <authorList>
            <person name="Lipkin A."/>
            <person name="Anisimova V."/>
            <person name="Nikonorova A."/>
            <person name="Babakov A."/>
            <person name="Krause E."/>
            <person name="Bienert M."/>
            <person name="Grishin E."/>
            <person name="Egorov T."/>
        </authorList>
    </citation>
    <scope>NUCLEOTIDE SEQUENCE [MRNA]</scope>
    <scope>PROTEIN SEQUENCE OF 26-55</scope>
    <scope>FUNCTION</scope>
    <scope>DISULFIDE BONDS</scope>
    <scope>MASS SPECTROMETRY</scope>
    <source>
        <tissue evidence="3">Seed</tissue>
    </source>
</reference>
<sequence length="89" mass="9039">MVNMKSVALIVIVMMAFMMVDPSMGAGECVQGRCPSGMCCSQFGYCGRGPKYCGRASTTVDHQADAAAAAATKTANNPTDAKLAGAGSP</sequence>
<protein>
    <recommendedName>
        <fullName>Antimicrobial peptide Ar-AMP</fullName>
    </recommendedName>
</protein>
<comment type="function">
    <text evidence="3">Chitin-binding protein that inhibits the growth of the fungal pathogens B.cinerea, F.culmorum, H.sativum and A.consortiale, but not that of R.solani. Induces morphological changes in the fungal pathogens F.culmorum, H.sativum and R.solani, but not in A.consortiale and B.cinerea. Has antibacterial activity against the Gram-positive bacterium B.subtilis, but lacks antibacterial activity against the Gram-negative bacterium E.coli.</text>
</comment>
<comment type="mass spectrometry" mass="3153.6" method="MALDI" evidence="3"/>
<keyword id="KW-0044">Antibiotic</keyword>
<keyword id="KW-0929">Antimicrobial</keyword>
<keyword id="KW-0147">Chitin-binding</keyword>
<keyword id="KW-0903">Direct protein sequencing</keyword>
<keyword id="KW-1015">Disulfide bond</keyword>
<keyword id="KW-0295">Fungicide</keyword>
<keyword id="KW-0611">Plant defense</keyword>
<keyword id="KW-0732">Signal</keyword>
<dbReference type="EMBL" id="AY861660">
    <property type="protein sequence ID" value="AAW56634.1"/>
    <property type="molecule type" value="mRNA"/>
</dbReference>
<dbReference type="SMR" id="Q5I2B2"/>
<dbReference type="CAZy" id="CBM18">
    <property type="family name" value="Carbohydrate-Binding Module Family 18"/>
</dbReference>
<dbReference type="GO" id="GO:0008061">
    <property type="term" value="F:chitin binding"/>
    <property type="evidence" value="ECO:0000314"/>
    <property type="project" value="UniProtKB"/>
</dbReference>
<dbReference type="GO" id="GO:0050832">
    <property type="term" value="P:defense response to fungus"/>
    <property type="evidence" value="ECO:0000314"/>
    <property type="project" value="UniProtKB"/>
</dbReference>
<dbReference type="GO" id="GO:0050830">
    <property type="term" value="P:defense response to Gram-positive bacterium"/>
    <property type="evidence" value="ECO:0000314"/>
    <property type="project" value="UniProtKB"/>
</dbReference>
<dbReference type="GO" id="GO:0031640">
    <property type="term" value="P:killing of cells of another organism"/>
    <property type="evidence" value="ECO:0007669"/>
    <property type="project" value="UniProtKB-KW"/>
</dbReference>
<dbReference type="CDD" id="cd00035">
    <property type="entry name" value="ChtBD1"/>
    <property type="match status" value="1"/>
</dbReference>
<dbReference type="FunFam" id="3.30.60.10:FF:000006">
    <property type="entry name" value="Agglutinin isolectin 1"/>
    <property type="match status" value="1"/>
</dbReference>
<dbReference type="Gene3D" id="3.30.60.10">
    <property type="entry name" value="Endochitinase-like"/>
    <property type="match status" value="1"/>
</dbReference>
<dbReference type="InterPro" id="IPR013006">
    <property type="entry name" value="Antimicrobial_C6_CS"/>
</dbReference>
<dbReference type="InterPro" id="IPR001002">
    <property type="entry name" value="Chitin-bd_1"/>
</dbReference>
<dbReference type="InterPro" id="IPR018371">
    <property type="entry name" value="Chitin-binding_1_CS"/>
</dbReference>
<dbReference type="InterPro" id="IPR036861">
    <property type="entry name" value="Endochitinase-like_sf"/>
</dbReference>
<dbReference type="Pfam" id="PF00187">
    <property type="entry name" value="Chitin_bind_1"/>
    <property type="match status" value="1"/>
</dbReference>
<dbReference type="PRINTS" id="PR00451">
    <property type="entry name" value="CHITINBINDNG"/>
</dbReference>
<dbReference type="SMART" id="SM00270">
    <property type="entry name" value="ChtBD1"/>
    <property type="match status" value="1"/>
</dbReference>
<dbReference type="SUPFAM" id="SSF57016">
    <property type="entry name" value="Plant lectins/antimicrobial peptides"/>
    <property type="match status" value="1"/>
</dbReference>
<dbReference type="PROSITE" id="PS00026">
    <property type="entry name" value="CHIT_BIND_I_1"/>
    <property type="match status" value="1"/>
</dbReference>
<dbReference type="PROSITE" id="PS50941">
    <property type="entry name" value="CHIT_BIND_I_2"/>
    <property type="match status" value="1"/>
</dbReference>
<dbReference type="PROSITE" id="PS60011">
    <property type="entry name" value="PLANT_C6_AMP"/>
    <property type="match status" value="1"/>
</dbReference>
<name>AMP_AMARE</name>
<evidence type="ECO:0000250" key="1">
    <source>
        <dbReference type="UniProtKB" id="P27275"/>
    </source>
</evidence>
<evidence type="ECO:0000255" key="2">
    <source>
        <dbReference type="PROSITE-ProRule" id="PRU00261"/>
    </source>
</evidence>
<evidence type="ECO:0000269" key="3">
    <source>
    </source>
</evidence>
<evidence type="ECO:0000305" key="4"/>
<evidence type="ECO:0000312" key="5">
    <source>
        <dbReference type="EMBL" id="AAW56634.1"/>
    </source>
</evidence>